<evidence type="ECO:0000255" key="1">
    <source>
        <dbReference type="PROSITE-ProRule" id="PRU00628"/>
    </source>
</evidence>
<evidence type="ECO:0000269" key="2">
    <source>
    </source>
</evidence>
<evidence type="ECO:0000305" key="3"/>
<dbReference type="EMBL" id="M17904">
    <property type="protein sequence ID" value="AAA25737.1"/>
    <property type="status" value="ALT_SEQ"/>
    <property type="molecule type" value="Genomic_DNA"/>
</dbReference>
<dbReference type="SMR" id="P08086"/>
<dbReference type="UniPathway" id="UPA00272">
    <property type="reaction ID" value="UER00391"/>
</dbReference>
<dbReference type="GO" id="GO:0051537">
    <property type="term" value="F:2 iron, 2 sulfur cluster binding"/>
    <property type="evidence" value="ECO:0007669"/>
    <property type="project" value="UniProtKB-KW"/>
</dbReference>
<dbReference type="GO" id="GO:0046872">
    <property type="term" value="F:metal ion binding"/>
    <property type="evidence" value="ECO:0007669"/>
    <property type="project" value="UniProtKB-KW"/>
</dbReference>
<dbReference type="GO" id="GO:0009056">
    <property type="term" value="P:catabolic process"/>
    <property type="evidence" value="ECO:0007669"/>
    <property type="project" value="UniProtKB-KW"/>
</dbReference>
<dbReference type="CDD" id="cd03528">
    <property type="entry name" value="Rieske_RO_ferredoxin"/>
    <property type="match status" value="1"/>
</dbReference>
<dbReference type="Gene3D" id="2.102.10.10">
    <property type="entry name" value="Rieske [2Fe-2S] iron-sulphur domain"/>
    <property type="match status" value="1"/>
</dbReference>
<dbReference type="InterPro" id="IPR017941">
    <property type="entry name" value="Rieske_2Fe-2S"/>
</dbReference>
<dbReference type="InterPro" id="IPR036922">
    <property type="entry name" value="Rieske_2Fe-2S_sf"/>
</dbReference>
<dbReference type="PANTHER" id="PTHR21496:SF23">
    <property type="entry name" value="3-PHENYLPROPIONATE_CINNAMIC ACID DIOXYGENASE FERREDOXIN SUBUNIT"/>
    <property type="match status" value="1"/>
</dbReference>
<dbReference type="PANTHER" id="PTHR21496">
    <property type="entry name" value="FERREDOXIN-RELATED"/>
    <property type="match status" value="1"/>
</dbReference>
<dbReference type="Pfam" id="PF00355">
    <property type="entry name" value="Rieske"/>
    <property type="match status" value="1"/>
</dbReference>
<dbReference type="SUPFAM" id="SSF50022">
    <property type="entry name" value="ISP domain"/>
    <property type="match status" value="1"/>
</dbReference>
<dbReference type="PROSITE" id="PS51296">
    <property type="entry name" value="RIESKE"/>
    <property type="match status" value="1"/>
</dbReference>
<reference key="1">
    <citation type="journal article" date="1987" name="J. Bacteriol.">
        <title>Nucleotide sequencing and characterization of the genes encoding benzene oxidation enzymes of Pseudomonas putida.</title>
        <authorList>
            <person name="Irie S."/>
            <person name="Doi S."/>
            <person name="Yorifuji T."/>
            <person name="Takagi M."/>
            <person name="Yano K."/>
        </authorList>
    </citation>
    <scope>NUCLEOTIDE SEQUENCE [GENOMIC DNA]</scope>
    <source>
        <strain>BE-81</strain>
    </source>
</reference>
<reference key="2">
    <citation type="journal article" date="1988" name="FEBS Lett.">
        <title>Primary structure of protein B from Pseudomonas putida, member of a new class of 2Fe-2S ferredoxins.</title>
        <authorList>
            <person name="Morrice N."/>
            <person name="Geary P."/>
            <person name="Cammack R."/>
            <person name="Harris A."/>
            <person name="Beg F."/>
            <person name="Aitken A."/>
        </authorList>
    </citation>
    <scope>PROTEIN SEQUENCE OF 2-107</scope>
    <source>
        <strain>ML2</strain>
    </source>
</reference>
<protein>
    <recommendedName>
        <fullName>Benzene 1,2-dioxygenase system ferredoxin subunit</fullName>
    </recommendedName>
    <alternativeName>
        <fullName>P3 subunit</fullName>
    </alternativeName>
</protein>
<name>BNZC_PSEPU</name>
<proteinExistence type="evidence at protein level"/>
<gene>
    <name type="primary">bnzC</name>
</gene>
<feature type="initiator methionine" description="Removed" evidence="2">
    <location>
        <position position="1"/>
    </location>
</feature>
<feature type="chain" id="PRO_0000201685" description="Benzene 1,2-dioxygenase system ferredoxin subunit">
    <location>
        <begin position="2"/>
        <end position="107"/>
    </location>
</feature>
<feature type="domain" description="Rieske" evidence="1">
    <location>
        <begin position="4"/>
        <end position="99"/>
    </location>
</feature>
<feature type="binding site" evidence="1">
    <location>
        <position position="43"/>
    </location>
    <ligand>
        <name>[2Fe-2S] cluster</name>
        <dbReference type="ChEBI" id="CHEBI:190135"/>
    </ligand>
</feature>
<feature type="binding site" evidence="1">
    <location>
        <position position="45"/>
    </location>
    <ligand>
        <name>[2Fe-2S] cluster</name>
        <dbReference type="ChEBI" id="CHEBI:190135"/>
    </ligand>
</feature>
<feature type="binding site" evidence="1">
    <location>
        <position position="62"/>
    </location>
    <ligand>
        <name>[2Fe-2S] cluster</name>
        <dbReference type="ChEBI" id="CHEBI:190135"/>
    </ligand>
</feature>
<feature type="binding site" evidence="1">
    <location>
        <position position="65"/>
    </location>
    <ligand>
        <name>[2Fe-2S] cluster</name>
        <dbReference type="ChEBI" id="CHEBI:190135"/>
    </ligand>
</feature>
<feature type="sequence variant" description="In strain: ML2.">
    <original>P</original>
    <variation>S</variation>
    <location>
        <position position="24"/>
    </location>
</feature>
<feature type="sequence variant" description="In strain: ML2.">
    <original>D</original>
    <variation>E</variation>
    <location>
        <position position="52"/>
    </location>
</feature>
<feature type="sequence variant" description="In strain: ML2.">
    <original>I</original>
    <variation>V</variation>
    <location>
        <position position="59"/>
    </location>
</feature>
<feature type="sequence variant" description="In strain: ML2.">
    <original>F</original>
    <variation>Y</variation>
    <location>
        <position position="88"/>
    </location>
</feature>
<feature type="sequence variant" description="In strain: ML2.">
    <original>V</original>
    <variation>I</variation>
    <location>
        <position position="92"/>
    </location>
</feature>
<sequence length="107" mass="11906">MTWTYILRQSDLPPGEMQRYEGGPEPVMVCNVDGDFFAVQDTCTHGDWALSDGYLDGDIVECTLHFGKFCVRTGKVKALPACKPIKVFPIKVEGDEVHVDLDNGELK</sequence>
<comment type="function">
    <text>This protein seems to be a 2Fe-2S ferredoxin.</text>
</comment>
<comment type="pathway">
    <text>Aromatic compound metabolism; benzene degradation; catechol from benzene: step 1/2.</text>
</comment>
<comment type="subunit">
    <text>This dioxygenase system consists of four proteins: the two subunits of the hydroxylase component (BnzA and BnzB), a ferredoxin (BnzC) and a ferredoxin reductase (BnzD).</text>
</comment>
<comment type="similarity">
    <text evidence="3">Belongs to the bacterial ring-hydroxylating dioxygenase ferredoxin component family.</text>
</comment>
<accession>P08086</accession>
<organism>
    <name type="scientific">Pseudomonas putida</name>
    <name type="common">Arthrobacter siderocapsulatus</name>
    <dbReference type="NCBI Taxonomy" id="303"/>
    <lineage>
        <taxon>Bacteria</taxon>
        <taxon>Pseudomonadati</taxon>
        <taxon>Pseudomonadota</taxon>
        <taxon>Gammaproteobacteria</taxon>
        <taxon>Pseudomonadales</taxon>
        <taxon>Pseudomonadaceae</taxon>
        <taxon>Pseudomonas</taxon>
    </lineage>
</organism>
<keyword id="KW-0001">2Fe-2S</keyword>
<keyword id="KW-0058">Aromatic hydrocarbons catabolism</keyword>
<keyword id="KW-0903">Direct protein sequencing</keyword>
<keyword id="KW-0249">Electron transport</keyword>
<keyword id="KW-0408">Iron</keyword>
<keyword id="KW-0411">Iron-sulfur</keyword>
<keyword id="KW-0479">Metal-binding</keyword>
<keyword id="KW-0813">Transport</keyword>